<proteinExistence type="inferred from homology"/>
<keyword id="KW-0067">ATP-binding</keyword>
<keyword id="KW-0963">Cytoplasm</keyword>
<keyword id="KW-0418">Kinase</keyword>
<keyword id="KW-0460">Magnesium</keyword>
<keyword id="KW-0479">Metal-binding</keyword>
<keyword id="KW-0547">Nucleotide-binding</keyword>
<keyword id="KW-1185">Reference proteome</keyword>
<keyword id="KW-0808">Transferase</keyword>
<gene>
    <name evidence="1" type="primary">ackA</name>
    <name type="ordered locus">SERP1275</name>
</gene>
<dbReference type="EC" id="2.7.2.1" evidence="1"/>
<dbReference type="EMBL" id="CP000029">
    <property type="protein sequence ID" value="AAW54669.1"/>
    <property type="molecule type" value="Genomic_DNA"/>
</dbReference>
<dbReference type="RefSeq" id="WP_001830869.1">
    <property type="nucleotide sequence ID" value="NC_002976.3"/>
</dbReference>
<dbReference type="SMR" id="Q5HNJ4"/>
<dbReference type="STRING" id="176279.SERP1275"/>
<dbReference type="KEGG" id="ser:SERP1275"/>
<dbReference type="eggNOG" id="COG0282">
    <property type="taxonomic scope" value="Bacteria"/>
</dbReference>
<dbReference type="HOGENOM" id="CLU_020352_0_1_9"/>
<dbReference type="UniPathway" id="UPA00340">
    <property type="reaction ID" value="UER00458"/>
</dbReference>
<dbReference type="Proteomes" id="UP000000531">
    <property type="component" value="Chromosome"/>
</dbReference>
<dbReference type="GO" id="GO:0005737">
    <property type="term" value="C:cytoplasm"/>
    <property type="evidence" value="ECO:0007669"/>
    <property type="project" value="UniProtKB-SubCell"/>
</dbReference>
<dbReference type="GO" id="GO:0008776">
    <property type="term" value="F:acetate kinase activity"/>
    <property type="evidence" value="ECO:0007669"/>
    <property type="project" value="UniProtKB-UniRule"/>
</dbReference>
<dbReference type="GO" id="GO:0005524">
    <property type="term" value="F:ATP binding"/>
    <property type="evidence" value="ECO:0007669"/>
    <property type="project" value="UniProtKB-KW"/>
</dbReference>
<dbReference type="GO" id="GO:0000287">
    <property type="term" value="F:magnesium ion binding"/>
    <property type="evidence" value="ECO:0007669"/>
    <property type="project" value="UniProtKB-UniRule"/>
</dbReference>
<dbReference type="GO" id="GO:0006083">
    <property type="term" value="P:acetate metabolic process"/>
    <property type="evidence" value="ECO:0007669"/>
    <property type="project" value="TreeGrafter"/>
</dbReference>
<dbReference type="GO" id="GO:0006085">
    <property type="term" value="P:acetyl-CoA biosynthetic process"/>
    <property type="evidence" value="ECO:0007669"/>
    <property type="project" value="UniProtKB-UniRule"/>
</dbReference>
<dbReference type="CDD" id="cd24010">
    <property type="entry name" value="ASKHA_NBD_AcK_PK"/>
    <property type="match status" value="1"/>
</dbReference>
<dbReference type="Gene3D" id="3.30.420.40">
    <property type="match status" value="2"/>
</dbReference>
<dbReference type="HAMAP" id="MF_00020">
    <property type="entry name" value="Acetate_kinase"/>
    <property type="match status" value="1"/>
</dbReference>
<dbReference type="InterPro" id="IPR004372">
    <property type="entry name" value="Ac/propionate_kinase"/>
</dbReference>
<dbReference type="InterPro" id="IPR000890">
    <property type="entry name" value="Aliphatic_acid_kin_short-chain"/>
</dbReference>
<dbReference type="InterPro" id="IPR023865">
    <property type="entry name" value="Aliphatic_acid_kinase_CS"/>
</dbReference>
<dbReference type="InterPro" id="IPR043129">
    <property type="entry name" value="ATPase_NBD"/>
</dbReference>
<dbReference type="NCBIfam" id="TIGR00016">
    <property type="entry name" value="ackA"/>
    <property type="match status" value="1"/>
</dbReference>
<dbReference type="PANTHER" id="PTHR21060">
    <property type="entry name" value="ACETATE KINASE"/>
    <property type="match status" value="1"/>
</dbReference>
<dbReference type="PANTHER" id="PTHR21060:SF15">
    <property type="entry name" value="ACETATE KINASE-RELATED"/>
    <property type="match status" value="1"/>
</dbReference>
<dbReference type="Pfam" id="PF00871">
    <property type="entry name" value="Acetate_kinase"/>
    <property type="match status" value="1"/>
</dbReference>
<dbReference type="PIRSF" id="PIRSF000722">
    <property type="entry name" value="Acetate_prop_kin"/>
    <property type="match status" value="1"/>
</dbReference>
<dbReference type="PRINTS" id="PR00471">
    <property type="entry name" value="ACETATEKNASE"/>
</dbReference>
<dbReference type="SUPFAM" id="SSF53067">
    <property type="entry name" value="Actin-like ATPase domain"/>
    <property type="match status" value="2"/>
</dbReference>
<dbReference type="PROSITE" id="PS01075">
    <property type="entry name" value="ACETATE_KINASE_1"/>
    <property type="match status" value="1"/>
</dbReference>
<dbReference type="PROSITE" id="PS01076">
    <property type="entry name" value="ACETATE_KINASE_2"/>
    <property type="match status" value="1"/>
</dbReference>
<feature type="chain" id="PRO_0000107617" description="Acetate kinase">
    <location>
        <begin position="1"/>
        <end position="417"/>
    </location>
</feature>
<feature type="active site" description="Proton donor/acceptor" evidence="1">
    <location>
        <position position="147"/>
    </location>
</feature>
<feature type="binding site" evidence="1">
    <location>
        <position position="9"/>
    </location>
    <ligand>
        <name>Mg(2+)</name>
        <dbReference type="ChEBI" id="CHEBI:18420"/>
    </ligand>
</feature>
<feature type="binding site" evidence="1">
    <location>
        <position position="16"/>
    </location>
    <ligand>
        <name>ATP</name>
        <dbReference type="ChEBI" id="CHEBI:30616"/>
    </ligand>
</feature>
<feature type="binding site" evidence="1">
    <location>
        <position position="90"/>
    </location>
    <ligand>
        <name>substrate</name>
    </ligand>
</feature>
<feature type="binding site" evidence="1">
    <location>
        <begin position="207"/>
        <end position="211"/>
    </location>
    <ligand>
        <name>ATP</name>
        <dbReference type="ChEBI" id="CHEBI:30616"/>
    </ligand>
</feature>
<feature type="binding site" evidence="1">
    <location>
        <begin position="282"/>
        <end position="284"/>
    </location>
    <ligand>
        <name>ATP</name>
        <dbReference type="ChEBI" id="CHEBI:30616"/>
    </ligand>
</feature>
<feature type="binding site" evidence="1">
    <location>
        <begin position="330"/>
        <end position="334"/>
    </location>
    <ligand>
        <name>ATP</name>
        <dbReference type="ChEBI" id="CHEBI:30616"/>
    </ligand>
</feature>
<feature type="binding site" evidence="1">
    <location>
        <position position="384"/>
    </location>
    <ligand>
        <name>Mg(2+)</name>
        <dbReference type="ChEBI" id="CHEBI:18420"/>
    </ligand>
</feature>
<feature type="site" description="Transition state stabilizer" evidence="1">
    <location>
        <position position="179"/>
    </location>
</feature>
<feature type="site" description="Transition state stabilizer" evidence="1">
    <location>
        <position position="240"/>
    </location>
</feature>
<organism>
    <name type="scientific">Staphylococcus epidermidis (strain ATCC 35984 / DSM 28319 / BCRC 17069 / CCUG 31568 / BM 3577 / RP62A)</name>
    <dbReference type="NCBI Taxonomy" id="176279"/>
    <lineage>
        <taxon>Bacteria</taxon>
        <taxon>Bacillati</taxon>
        <taxon>Bacillota</taxon>
        <taxon>Bacilli</taxon>
        <taxon>Bacillales</taxon>
        <taxon>Staphylococcaceae</taxon>
        <taxon>Staphylococcus</taxon>
    </lineage>
</organism>
<name>ACKA_STAEQ</name>
<accession>Q5HNJ4</accession>
<reference key="1">
    <citation type="journal article" date="2005" name="J. Bacteriol.">
        <title>Insights on evolution of virulence and resistance from the complete genome analysis of an early methicillin-resistant Staphylococcus aureus strain and a biofilm-producing methicillin-resistant Staphylococcus epidermidis strain.</title>
        <authorList>
            <person name="Gill S.R."/>
            <person name="Fouts D.E."/>
            <person name="Archer G.L."/>
            <person name="Mongodin E.F."/>
            <person name="DeBoy R.T."/>
            <person name="Ravel J."/>
            <person name="Paulsen I.T."/>
            <person name="Kolonay J.F."/>
            <person name="Brinkac L.M."/>
            <person name="Beanan M.J."/>
            <person name="Dodson R.J."/>
            <person name="Daugherty S.C."/>
            <person name="Madupu R."/>
            <person name="Angiuoli S.V."/>
            <person name="Durkin A.S."/>
            <person name="Haft D.H."/>
            <person name="Vamathevan J.J."/>
            <person name="Khouri H."/>
            <person name="Utterback T.R."/>
            <person name="Lee C."/>
            <person name="Dimitrov G."/>
            <person name="Jiang L."/>
            <person name="Qin H."/>
            <person name="Weidman J."/>
            <person name="Tran K."/>
            <person name="Kang K.H."/>
            <person name="Hance I.R."/>
            <person name="Nelson K.E."/>
            <person name="Fraser C.M."/>
        </authorList>
    </citation>
    <scope>NUCLEOTIDE SEQUENCE [LARGE SCALE GENOMIC DNA]</scope>
    <source>
        <strain>ATCC 35984 / DSM 28319 / BCRC 17069 / CCUG 31568 / BM 3577 / RP62A</strain>
    </source>
</reference>
<sequence length="417" mass="46338">MSKLILAVNAGSSSLKFQLIKMPEEKLVTKGVIERIGLSDSIFTIHVNGEKLTDIRDIHNHEEAVNIMLDSFKEHEMIKDITDIQGTGHRVVHGGETFPKSVVVTDEVESQIEELSELAPLHNPANLMGIRAFRKLLPEIPHVAVFDTSFHQTMPEQAYLYSLPYHYYEDYGIRKYGFHGTSHKYVSRRAAQIVGRPIEDLRIISCHIGNGASIAAIDGGESIDTSMGFTPLAGVTMGTRSGNLDPALIPFIMEKTGKTADEVLEILNKESGLLGLTGTSSDLRDLTEEAKHGRQRSRVALDLFASKIHKYIGSYAARMHGVDVIVFTAGIGENSHIIRGKVLEGLEFMGVYWDPKKNESLHGEEGYINYPHSPVKVLVVPTDEEVMISRDVIKYGKLNDNTPKKEEFDTNESIEVN</sequence>
<comment type="function">
    <text evidence="1">Catalyzes the formation of acetyl phosphate from acetate and ATP. Can also catalyze the reverse reaction.</text>
</comment>
<comment type="catalytic activity">
    <reaction evidence="1">
        <text>acetate + ATP = acetyl phosphate + ADP</text>
        <dbReference type="Rhea" id="RHEA:11352"/>
        <dbReference type="ChEBI" id="CHEBI:22191"/>
        <dbReference type="ChEBI" id="CHEBI:30089"/>
        <dbReference type="ChEBI" id="CHEBI:30616"/>
        <dbReference type="ChEBI" id="CHEBI:456216"/>
        <dbReference type="EC" id="2.7.2.1"/>
    </reaction>
</comment>
<comment type="cofactor">
    <cofactor evidence="1">
        <name>Mg(2+)</name>
        <dbReference type="ChEBI" id="CHEBI:18420"/>
    </cofactor>
    <cofactor evidence="1">
        <name>Mn(2+)</name>
        <dbReference type="ChEBI" id="CHEBI:29035"/>
    </cofactor>
    <text evidence="1">Mg(2+). Can also accept Mn(2+).</text>
</comment>
<comment type="pathway">
    <text evidence="1">Metabolic intermediate biosynthesis; acetyl-CoA biosynthesis; acetyl-CoA from acetate: step 1/2.</text>
</comment>
<comment type="subunit">
    <text evidence="1">Homodimer.</text>
</comment>
<comment type="subcellular location">
    <subcellularLocation>
        <location evidence="1">Cytoplasm</location>
    </subcellularLocation>
</comment>
<comment type="similarity">
    <text evidence="1">Belongs to the acetokinase family.</text>
</comment>
<protein>
    <recommendedName>
        <fullName evidence="1">Acetate kinase</fullName>
        <ecNumber evidence="1">2.7.2.1</ecNumber>
    </recommendedName>
    <alternativeName>
        <fullName evidence="1">Acetokinase</fullName>
    </alternativeName>
</protein>
<evidence type="ECO:0000255" key="1">
    <source>
        <dbReference type="HAMAP-Rule" id="MF_00020"/>
    </source>
</evidence>